<feature type="chain" id="PRO_0000282261" description="UPF0060 membrane protein RPB_2370">
    <location>
        <begin position="1"/>
        <end position="107"/>
    </location>
</feature>
<feature type="transmembrane region" description="Helical" evidence="1">
    <location>
        <begin position="5"/>
        <end position="25"/>
    </location>
</feature>
<feature type="transmembrane region" description="Helical" evidence="1">
    <location>
        <begin position="31"/>
        <end position="51"/>
    </location>
</feature>
<feature type="transmembrane region" description="Helical" evidence="1">
    <location>
        <begin position="61"/>
        <end position="81"/>
    </location>
</feature>
<feature type="transmembrane region" description="Helical" evidence="1">
    <location>
        <begin position="85"/>
        <end position="105"/>
    </location>
</feature>
<keyword id="KW-0997">Cell inner membrane</keyword>
<keyword id="KW-1003">Cell membrane</keyword>
<keyword id="KW-0472">Membrane</keyword>
<keyword id="KW-1185">Reference proteome</keyword>
<keyword id="KW-0812">Transmembrane</keyword>
<keyword id="KW-1133">Transmembrane helix</keyword>
<proteinExistence type="inferred from homology"/>
<evidence type="ECO:0000255" key="1">
    <source>
        <dbReference type="HAMAP-Rule" id="MF_00010"/>
    </source>
</evidence>
<dbReference type="EMBL" id="CP000250">
    <property type="protein sequence ID" value="ABD07075.1"/>
    <property type="molecule type" value="Genomic_DNA"/>
</dbReference>
<dbReference type="RefSeq" id="WP_011441260.1">
    <property type="nucleotide sequence ID" value="NC_007778.1"/>
</dbReference>
<dbReference type="SMR" id="Q2IXI5"/>
<dbReference type="STRING" id="316058.RPB_2370"/>
<dbReference type="KEGG" id="rpb:RPB_2370"/>
<dbReference type="eggNOG" id="COG1742">
    <property type="taxonomic scope" value="Bacteria"/>
</dbReference>
<dbReference type="HOGENOM" id="CLU_117653_1_0_5"/>
<dbReference type="OrthoDB" id="123240at2"/>
<dbReference type="Proteomes" id="UP000008809">
    <property type="component" value="Chromosome"/>
</dbReference>
<dbReference type="GO" id="GO:0005886">
    <property type="term" value="C:plasma membrane"/>
    <property type="evidence" value="ECO:0007669"/>
    <property type="project" value="UniProtKB-SubCell"/>
</dbReference>
<dbReference type="HAMAP" id="MF_00010">
    <property type="entry name" value="UPF0060"/>
    <property type="match status" value="1"/>
</dbReference>
<dbReference type="InterPro" id="IPR003844">
    <property type="entry name" value="UPF0060"/>
</dbReference>
<dbReference type="NCBIfam" id="NF002586">
    <property type="entry name" value="PRK02237.1"/>
    <property type="match status" value="1"/>
</dbReference>
<dbReference type="PANTHER" id="PTHR36116">
    <property type="entry name" value="UPF0060 MEMBRANE PROTEIN YNFA"/>
    <property type="match status" value="1"/>
</dbReference>
<dbReference type="PANTHER" id="PTHR36116:SF1">
    <property type="entry name" value="UPF0060 MEMBRANE PROTEIN YNFA"/>
    <property type="match status" value="1"/>
</dbReference>
<dbReference type="Pfam" id="PF02694">
    <property type="entry name" value="UPF0060"/>
    <property type="match status" value="1"/>
</dbReference>
<dbReference type="SUPFAM" id="SSF103481">
    <property type="entry name" value="Multidrug resistance efflux transporter EmrE"/>
    <property type="match status" value="1"/>
</dbReference>
<accession>Q2IXI5</accession>
<sequence>MNTAIIYVGAAIAEIAGCFAFWGWLRLGKPVWWLAPGLLSLALFAYLLTLVESEAAGRAYAAYGGIYIVASLAWLWSVEGVRPDRWDVSGACVCLAGAAIILWGPRG</sequence>
<organism>
    <name type="scientific">Rhodopseudomonas palustris (strain HaA2)</name>
    <dbReference type="NCBI Taxonomy" id="316058"/>
    <lineage>
        <taxon>Bacteria</taxon>
        <taxon>Pseudomonadati</taxon>
        <taxon>Pseudomonadota</taxon>
        <taxon>Alphaproteobacteria</taxon>
        <taxon>Hyphomicrobiales</taxon>
        <taxon>Nitrobacteraceae</taxon>
        <taxon>Rhodopseudomonas</taxon>
    </lineage>
</organism>
<protein>
    <recommendedName>
        <fullName evidence="1">UPF0060 membrane protein RPB_2370</fullName>
    </recommendedName>
</protein>
<gene>
    <name type="ordered locus">RPB_2370</name>
</gene>
<comment type="subcellular location">
    <subcellularLocation>
        <location evidence="1">Cell inner membrane</location>
        <topology evidence="1">Multi-pass membrane protein</topology>
    </subcellularLocation>
</comment>
<comment type="similarity">
    <text evidence="1">Belongs to the UPF0060 family.</text>
</comment>
<reference key="1">
    <citation type="submission" date="2006-01" db="EMBL/GenBank/DDBJ databases">
        <title>Complete sequence of Rhodopseudomonas palustris HaA2.</title>
        <authorList>
            <consortium name="US DOE Joint Genome Institute"/>
            <person name="Copeland A."/>
            <person name="Lucas S."/>
            <person name="Lapidus A."/>
            <person name="Barry K."/>
            <person name="Detter J.C."/>
            <person name="Glavina T."/>
            <person name="Hammon N."/>
            <person name="Israni S."/>
            <person name="Pitluck S."/>
            <person name="Chain P."/>
            <person name="Malfatti S."/>
            <person name="Shin M."/>
            <person name="Vergez L."/>
            <person name="Schmutz J."/>
            <person name="Larimer F."/>
            <person name="Land M."/>
            <person name="Hauser L."/>
            <person name="Pelletier D.A."/>
            <person name="Kyrpides N."/>
            <person name="Anderson I."/>
            <person name="Oda Y."/>
            <person name="Harwood C.S."/>
            <person name="Richardson P."/>
        </authorList>
    </citation>
    <scope>NUCLEOTIDE SEQUENCE [LARGE SCALE GENOMIC DNA]</scope>
    <source>
        <strain>HaA2</strain>
    </source>
</reference>
<name>Y2370_RHOP2</name>